<organism>
    <name type="scientific">Escherichia coli (strain ATCC 8739 / DSM 1576 / NBRC 3972 / NCIMB 8545 / WDCM 00012 / Crooks)</name>
    <dbReference type="NCBI Taxonomy" id="481805"/>
    <lineage>
        <taxon>Bacteria</taxon>
        <taxon>Pseudomonadati</taxon>
        <taxon>Pseudomonadota</taxon>
        <taxon>Gammaproteobacteria</taxon>
        <taxon>Enterobacterales</taxon>
        <taxon>Enterobacteriaceae</taxon>
        <taxon>Escherichia</taxon>
    </lineage>
</organism>
<accession>B1IYW0</accession>
<comment type="function">
    <text evidence="1">This enzyme is involved in nucleotide metabolism: it produces dUMP, the immediate precursor of thymidine nucleotides and it decreases the intracellular concentration of dUTP so that uracil cannot be incorporated into DNA.</text>
</comment>
<comment type="catalytic activity">
    <reaction evidence="1">
        <text>dUTP + H2O = dUMP + diphosphate + H(+)</text>
        <dbReference type="Rhea" id="RHEA:10248"/>
        <dbReference type="ChEBI" id="CHEBI:15377"/>
        <dbReference type="ChEBI" id="CHEBI:15378"/>
        <dbReference type="ChEBI" id="CHEBI:33019"/>
        <dbReference type="ChEBI" id="CHEBI:61555"/>
        <dbReference type="ChEBI" id="CHEBI:246422"/>
        <dbReference type="EC" id="3.6.1.23"/>
    </reaction>
</comment>
<comment type="cofactor">
    <cofactor evidence="1">
        <name>Mg(2+)</name>
        <dbReference type="ChEBI" id="CHEBI:18420"/>
    </cofactor>
</comment>
<comment type="pathway">
    <text evidence="1">Pyrimidine metabolism; dUMP biosynthesis; dUMP from dCTP (dUTP route): step 2/2.</text>
</comment>
<comment type="subunit">
    <text evidence="1">Homotrimer.</text>
</comment>
<comment type="similarity">
    <text evidence="1">Belongs to the dUTPase family.</text>
</comment>
<keyword id="KW-0378">Hydrolase</keyword>
<keyword id="KW-0460">Magnesium</keyword>
<keyword id="KW-0479">Metal-binding</keyword>
<keyword id="KW-0546">Nucleotide metabolism</keyword>
<name>DUT_ECOLC</name>
<protein>
    <recommendedName>
        <fullName evidence="1">Deoxyuridine 5'-triphosphate nucleotidohydrolase</fullName>
        <shortName evidence="1">dUTPase</shortName>
        <ecNumber evidence="1">3.6.1.23</ecNumber>
    </recommendedName>
    <alternativeName>
        <fullName evidence="1">dUTP pyrophosphatase</fullName>
    </alternativeName>
</protein>
<dbReference type="EC" id="3.6.1.23" evidence="1"/>
<dbReference type="EMBL" id="CP000946">
    <property type="protein sequence ID" value="ACA75757.1"/>
    <property type="molecule type" value="Genomic_DNA"/>
</dbReference>
<dbReference type="RefSeq" id="WP_000976070.1">
    <property type="nucleotide sequence ID" value="NZ_MTFT01000034.1"/>
</dbReference>
<dbReference type="SMR" id="B1IYW0"/>
<dbReference type="GeneID" id="93778355"/>
<dbReference type="KEGG" id="ecl:EcolC_0071"/>
<dbReference type="HOGENOM" id="CLU_068508_1_1_6"/>
<dbReference type="UniPathway" id="UPA00610">
    <property type="reaction ID" value="UER00666"/>
</dbReference>
<dbReference type="GO" id="GO:0004170">
    <property type="term" value="F:dUTP diphosphatase activity"/>
    <property type="evidence" value="ECO:0007669"/>
    <property type="project" value="UniProtKB-UniRule"/>
</dbReference>
<dbReference type="GO" id="GO:0000287">
    <property type="term" value="F:magnesium ion binding"/>
    <property type="evidence" value="ECO:0007669"/>
    <property type="project" value="UniProtKB-UniRule"/>
</dbReference>
<dbReference type="GO" id="GO:0006226">
    <property type="term" value="P:dUMP biosynthetic process"/>
    <property type="evidence" value="ECO:0007669"/>
    <property type="project" value="UniProtKB-UniRule"/>
</dbReference>
<dbReference type="GO" id="GO:0046081">
    <property type="term" value="P:dUTP catabolic process"/>
    <property type="evidence" value="ECO:0007669"/>
    <property type="project" value="InterPro"/>
</dbReference>
<dbReference type="CDD" id="cd07557">
    <property type="entry name" value="trimeric_dUTPase"/>
    <property type="match status" value="1"/>
</dbReference>
<dbReference type="FunFam" id="2.70.40.10:FF:000002">
    <property type="entry name" value="dUTP diphosphatase"/>
    <property type="match status" value="1"/>
</dbReference>
<dbReference type="Gene3D" id="2.70.40.10">
    <property type="match status" value="1"/>
</dbReference>
<dbReference type="HAMAP" id="MF_00116">
    <property type="entry name" value="dUTPase_bact"/>
    <property type="match status" value="1"/>
</dbReference>
<dbReference type="InterPro" id="IPR008181">
    <property type="entry name" value="dUTPase"/>
</dbReference>
<dbReference type="InterPro" id="IPR029054">
    <property type="entry name" value="dUTPase-like"/>
</dbReference>
<dbReference type="InterPro" id="IPR036157">
    <property type="entry name" value="dUTPase-like_sf"/>
</dbReference>
<dbReference type="InterPro" id="IPR033704">
    <property type="entry name" value="dUTPase_trimeric"/>
</dbReference>
<dbReference type="NCBIfam" id="TIGR00576">
    <property type="entry name" value="dut"/>
    <property type="match status" value="1"/>
</dbReference>
<dbReference type="NCBIfam" id="NF001862">
    <property type="entry name" value="PRK00601.1"/>
    <property type="match status" value="1"/>
</dbReference>
<dbReference type="PANTHER" id="PTHR11241">
    <property type="entry name" value="DEOXYURIDINE 5'-TRIPHOSPHATE NUCLEOTIDOHYDROLASE"/>
    <property type="match status" value="1"/>
</dbReference>
<dbReference type="PANTHER" id="PTHR11241:SF0">
    <property type="entry name" value="DEOXYURIDINE 5'-TRIPHOSPHATE NUCLEOTIDOHYDROLASE"/>
    <property type="match status" value="1"/>
</dbReference>
<dbReference type="Pfam" id="PF00692">
    <property type="entry name" value="dUTPase"/>
    <property type="match status" value="1"/>
</dbReference>
<dbReference type="SUPFAM" id="SSF51283">
    <property type="entry name" value="dUTPase-like"/>
    <property type="match status" value="1"/>
</dbReference>
<gene>
    <name evidence="1" type="primary">dut</name>
    <name type="ordered locus">EcolC_0071</name>
</gene>
<evidence type="ECO:0000255" key="1">
    <source>
        <dbReference type="HAMAP-Rule" id="MF_00116"/>
    </source>
</evidence>
<proteinExistence type="inferred from homology"/>
<reference key="1">
    <citation type="submission" date="2008-02" db="EMBL/GenBank/DDBJ databases">
        <title>Complete sequence of Escherichia coli C str. ATCC 8739.</title>
        <authorList>
            <person name="Copeland A."/>
            <person name="Lucas S."/>
            <person name="Lapidus A."/>
            <person name="Glavina del Rio T."/>
            <person name="Dalin E."/>
            <person name="Tice H."/>
            <person name="Bruce D."/>
            <person name="Goodwin L."/>
            <person name="Pitluck S."/>
            <person name="Kiss H."/>
            <person name="Brettin T."/>
            <person name="Detter J.C."/>
            <person name="Han C."/>
            <person name="Kuske C.R."/>
            <person name="Schmutz J."/>
            <person name="Larimer F."/>
            <person name="Land M."/>
            <person name="Hauser L."/>
            <person name="Kyrpides N."/>
            <person name="Mikhailova N."/>
            <person name="Ingram L."/>
            <person name="Richardson P."/>
        </authorList>
    </citation>
    <scope>NUCLEOTIDE SEQUENCE [LARGE SCALE GENOMIC DNA]</scope>
    <source>
        <strain>ATCC 8739 / DSM 1576 / NBRC 3972 / NCIMB 8545 / WDCM 00012 / Crooks</strain>
    </source>
</reference>
<sequence length="152" mass="16288">MMKKIDVKILDPRVGKEFPLPTYATSGSAGLDLRACLDDAVELAPGDTTLVPTGLAIHIADPSLAAMMLPRSGLGHKHGIVLGNLVGLIDSDYQGQLMISVWNRGQDSFTIQPGERIAQMIFVPVVQAEFNLVEDFDATDRGEGGFGHSGRQ</sequence>
<feature type="chain" id="PRO_1000094961" description="Deoxyuridine 5'-triphosphate nucleotidohydrolase">
    <location>
        <begin position="1"/>
        <end position="152"/>
    </location>
</feature>
<feature type="binding site" evidence="1">
    <location>
        <begin position="71"/>
        <end position="73"/>
    </location>
    <ligand>
        <name>substrate</name>
    </ligand>
</feature>
<feature type="binding site" evidence="1">
    <location>
        <position position="84"/>
    </location>
    <ligand>
        <name>substrate</name>
    </ligand>
</feature>
<feature type="binding site" evidence="1">
    <location>
        <begin position="88"/>
        <end position="90"/>
    </location>
    <ligand>
        <name>substrate</name>
    </ligand>
</feature>
<feature type="binding site" evidence="1">
    <location>
        <position position="98"/>
    </location>
    <ligand>
        <name>substrate</name>
    </ligand>
</feature>